<proteinExistence type="inferred from homology"/>
<gene>
    <name evidence="1" type="primary">ubiG</name>
    <name type="ordered locus">CPS_2330</name>
</gene>
<sequence>MSSQPLNVNEDEIAKFEQVASQWWDLTGDFKPLHQINPLRVQFISQHIALQVEGIDSKNGFYDMQIIDVGCGGGILSESLAKLGANVTGIDMGTEPLNVAKLHALETGVSINYQKITAEEKALENPGTFDVVTCMEMLEHVPDPASVIQACSTLVKPGGLIFFSTLNKSIKSYLLAILAAEKLLKIVPDGTHDHDKFIRPSQLIGWAEEHGLKCIDASGIHYNPITGNHKLNDSLDVNYILCCRKL</sequence>
<dbReference type="EC" id="2.1.1.222" evidence="1"/>
<dbReference type="EC" id="2.1.1.64" evidence="1"/>
<dbReference type="EMBL" id="CP000083">
    <property type="protein sequence ID" value="AAZ25560.1"/>
    <property type="molecule type" value="Genomic_DNA"/>
</dbReference>
<dbReference type="RefSeq" id="WP_011043144.1">
    <property type="nucleotide sequence ID" value="NC_003910.7"/>
</dbReference>
<dbReference type="SMR" id="Q482G8"/>
<dbReference type="STRING" id="167879.CPS_2330"/>
<dbReference type="KEGG" id="cps:CPS_2330"/>
<dbReference type="eggNOG" id="COG2227">
    <property type="taxonomic scope" value="Bacteria"/>
</dbReference>
<dbReference type="HOGENOM" id="CLU_042432_5_0_6"/>
<dbReference type="UniPathway" id="UPA00232"/>
<dbReference type="Proteomes" id="UP000000547">
    <property type="component" value="Chromosome"/>
</dbReference>
<dbReference type="GO" id="GO:0102208">
    <property type="term" value="F:2-polyprenyl-6-hydroxyphenol methylase activity"/>
    <property type="evidence" value="ECO:0007669"/>
    <property type="project" value="UniProtKB-EC"/>
</dbReference>
<dbReference type="GO" id="GO:0061542">
    <property type="term" value="F:3-demethylubiquinol 3-O-methyltransferase activity"/>
    <property type="evidence" value="ECO:0007669"/>
    <property type="project" value="UniProtKB-UniRule"/>
</dbReference>
<dbReference type="GO" id="GO:0010420">
    <property type="term" value="F:polyprenyldihydroxybenzoate methyltransferase activity"/>
    <property type="evidence" value="ECO:0007669"/>
    <property type="project" value="InterPro"/>
</dbReference>
<dbReference type="GO" id="GO:0032259">
    <property type="term" value="P:methylation"/>
    <property type="evidence" value="ECO:0007669"/>
    <property type="project" value="UniProtKB-KW"/>
</dbReference>
<dbReference type="CDD" id="cd02440">
    <property type="entry name" value="AdoMet_MTases"/>
    <property type="match status" value="1"/>
</dbReference>
<dbReference type="FunFam" id="3.40.50.150:FF:000028">
    <property type="entry name" value="Ubiquinone biosynthesis O-methyltransferase"/>
    <property type="match status" value="1"/>
</dbReference>
<dbReference type="Gene3D" id="3.40.50.150">
    <property type="entry name" value="Vaccinia Virus protein VP39"/>
    <property type="match status" value="1"/>
</dbReference>
<dbReference type="HAMAP" id="MF_00472">
    <property type="entry name" value="UbiG"/>
    <property type="match status" value="1"/>
</dbReference>
<dbReference type="InterPro" id="IPR029063">
    <property type="entry name" value="SAM-dependent_MTases_sf"/>
</dbReference>
<dbReference type="InterPro" id="IPR010233">
    <property type="entry name" value="UbiG_MeTrfase"/>
</dbReference>
<dbReference type="NCBIfam" id="TIGR01983">
    <property type="entry name" value="UbiG"/>
    <property type="match status" value="1"/>
</dbReference>
<dbReference type="PANTHER" id="PTHR43464">
    <property type="entry name" value="METHYLTRANSFERASE"/>
    <property type="match status" value="1"/>
</dbReference>
<dbReference type="PANTHER" id="PTHR43464:SF19">
    <property type="entry name" value="UBIQUINONE BIOSYNTHESIS O-METHYLTRANSFERASE, MITOCHONDRIAL"/>
    <property type="match status" value="1"/>
</dbReference>
<dbReference type="Pfam" id="PF13489">
    <property type="entry name" value="Methyltransf_23"/>
    <property type="match status" value="1"/>
</dbReference>
<dbReference type="SUPFAM" id="SSF53335">
    <property type="entry name" value="S-adenosyl-L-methionine-dependent methyltransferases"/>
    <property type="match status" value="1"/>
</dbReference>
<protein>
    <recommendedName>
        <fullName evidence="1">Ubiquinone biosynthesis O-methyltransferase</fullName>
    </recommendedName>
    <alternativeName>
        <fullName evidence="1">2-polyprenyl-6-hydroxyphenol methylase</fullName>
        <ecNumber evidence="1">2.1.1.222</ecNumber>
    </alternativeName>
    <alternativeName>
        <fullName evidence="1">3-demethylubiquinone 3-O-methyltransferase</fullName>
        <ecNumber evidence="1">2.1.1.64</ecNumber>
    </alternativeName>
</protein>
<reference key="1">
    <citation type="journal article" date="2005" name="Proc. Natl. Acad. Sci. U.S.A.">
        <title>The psychrophilic lifestyle as revealed by the genome sequence of Colwellia psychrerythraea 34H through genomic and proteomic analyses.</title>
        <authorList>
            <person name="Methe B.A."/>
            <person name="Nelson K.E."/>
            <person name="Deming J.W."/>
            <person name="Momen B."/>
            <person name="Melamud E."/>
            <person name="Zhang X."/>
            <person name="Moult J."/>
            <person name="Madupu R."/>
            <person name="Nelson W.C."/>
            <person name="Dodson R.J."/>
            <person name="Brinkac L.M."/>
            <person name="Daugherty S.C."/>
            <person name="Durkin A.S."/>
            <person name="DeBoy R.T."/>
            <person name="Kolonay J.F."/>
            <person name="Sullivan S.A."/>
            <person name="Zhou L."/>
            <person name="Davidsen T.M."/>
            <person name="Wu M."/>
            <person name="Huston A.L."/>
            <person name="Lewis M."/>
            <person name="Weaver B."/>
            <person name="Weidman J.F."/>
            <person name="Khouri H."/>
            <person name="Utterback T.R."/>
            <person name="Feldblyum T.V."/>
            <person name="Fraser C.M."/>
        </authorList>
    </citation>
    <scope>NUCLEOTIDE SEQUENCE [LARGE SCALE GENOMIC DNA]</scope>
    <source>
        <strain>34H / ATCC BAA-681</strain>
    </source>
</reference>
<accession>Q482G8</accession>
<organism>
    <name type="scientific">Colwellia psychrerythraea (strain 34H / ATCC BAA-681)</name>
    <name type="common">Vibrio psychroerythus</name>
    <dbReference type="NCBI Taxonomy" id="167879"/>
    <lineage>
        <taxon>Bacteria</taxon>
        <taxon>Pseudomonadati</taxon>
        <taxon>Pseudomonadota</taxon>
        <taxon>Gammaproteobacteria</taxon>
        <taxon>Alteromonadales</taxon>
        <taxon>Colwelliaceae</taxon>
        <taxon>Colwellia</taxon>
    </lineage>
</organism>
<evidence type="ECO:0000255" key="1">
    <source>
        <dbReference type="HAMAP-Rule" id="MF_00472"/>
    </source>
</evidence>
<name>UBIG_COLP3</name>
<keyword id="KW-0489">Methyltransferase</keyword>
<keyword id="KW-0949">S-adenosyl-L-methionine</keyword>
<keyword id="KW-0808">Transferase</keyword>
<keyword id="KW-0831">Ubiquinone biosynthesis</keyword>
<feature type="chain" id="PRO_0000241707" description="Ubiquinone biosynthesis O-methyltransferase">
    <location>
        <begin position="1"/>
        <end position="246"/>
    </location>
</feature>
<feature type="binding site" evidence="1">
    <location>
        <position position="40"/>
    </location>
    <ligand>
        <name>S-adenosyl-L-methionine</name>
        <dbReference type="ChEBI" id="CHEBI:59789"/>
    </ligand>
</feature>
<feature type="binding site" evidence="1">
    <location>
        <position position="70"/>
    </location>
    <ligand>
        <name>S-adenosyl-L-methionine</name>
        <dbReference type="ChEBI" id="CHEBI:59789"/>
    </ligand>
</feature>
<feature type="binding site" evidence="1">
    <location>
        <position position="91"/>
    </location>
    <ligand>
        <name>S-adenosyl-L-methionine</name>
        <dbReference type="ChEBI" id="CHEBI:59789"/>
    </ligand>
</feature>
<feature type="binding site" evidence="1">
    <location>
        <position position="135"/>
    </location>
    <ligand>
        <name>S-adenosyl-L-methionine</name>
        <dbReference type="ChEBI" id="CHEBI:59789"/>
    </ligand>
</feature>
<comment type="function">
    <text evidence="1">O-methyltransferase that catalyzes the 2 O-methylation steps in the ubiquinone biosynthetic pathway.</text>
</comment>
<comment type="catalytic activity">
    <reaction evidence="1">
        <text>a 3-demethylubiquinol + S-adenosyl-L-methionine = a ubiquinol + S-adenosyl-L-homocysteine + H(+)</text>
        <dbReference type="Rhea" id="RHEA:44380"/>
        <dbReference type="Rhea" id="RHEA-COMP:9566"/>
        <dbReference type="Rhea" id="RHEA-COMP:10914"/>
        <dbReference type="ChEBI" id="CHEBI:15378"/>
        <dbReference type="ChEBI" id="CHEBI:17976"/>
        <dbReference type="ChEBI" id="CHEBI:57856"/>
        <dbReference type="ChEBI" id="CHEBI:59789"/>
        <dbReference type="ChEBI" id="CHEBI:84422"/>
        <dbReference type="EC" id="2.1.1.64"/>
    </reaction>
</comment>
<comment type="catalytic activity">
    <reaction evidence="1">
        <text>a 3-(all-trans-polyprenyl)benzene-1,2-diol + S-adenosyl-L-methionine = a 2-methoxy-6-(all-trans-polyprenyl)phenol + S-adenosyl-L-homocysteine + H(+)</text>
        <dbReference type="Rhea" id="RHEA:31411"/>
        <dbReference type="Rhea" id="RHEA-COMP:9550"/>
        <dbReference type="Rhea" id="RHEA-COMP:9551"/>
        <dbReference type="ChEBI" id="CHEBI:15378"/>
        <dbReference type="ChEBI" id="CHEBI:57856"/>
        <dbReference type="ChEBI" id="CHEBI:59789"/>
        <dbReference type="ChEBI" id="CHEBI:62729"/>
        <dbReference type="ChEBI" id="CHEBI:62731"/>
        <dbReference type="EC" id="2.1.1.222"/>
    </reaction>
</comment>
<comment type="pathway">
    <text evidence="1">Cofactor biosynthesis; ubiquinone biosynthesis.</text>
</comment>
<comment type="similarity">
    <text evidence="1">Belongs to the methyltransferase superfamily. UbiG/COQ3 family.</text>
</comment>